<organism>
    <name type="scientific">Acinetobacter baylyi (strain ATCC 33305 / BD413 / ADP1)</name>
    <dbReference type="NCBI Taxonomy" id="62977"/>
    <lineage>
        <taxon>Bacteria</taxon>
        <taxon>Pseudomonadati</taxon>
        <taxon>Pseudomonadota</taxon>
        <taxon>Gammaproteobacteria</taxon>
        <taxon>Moraxellales</taxon>
        <taxon>Moraxellaceae</taxon>
        <taxon>Acinetobacter</taxon>
    </lineage>
</organism>
<feature type="chain" id="PRO_0000435018" description="Osmo-independent choline transporter BetT1">
    <location>
        <begin position="1"/>
        <end position="526"/>
    </location>
</feature>
<feature type="topological domain" description="Cytoplasmic" evidence="5">
    <location>
        <begin position="1"/>
        <end position="17"/>
    </location>
</feature>
<feature type="transmembrane region" description="Helical" evidence="1">
    <location>
        <begin position="18"/>
        <end position="38"/>
    </location>
</feature>
<feature type="topological domain" description="Periplasmic" evidence="5">
    <location>
        <begin position="39"/>
        <end position="56"/>
    </location>
</feature>
<feature type="transmembrane region" description="Helical" evidence="1">
    <location>
        <begin position="57"/>
        <end position="77"/>
    </location>
</feature>
<feature type="topological domain" description="Cytoplasmic" evidence="5">
    <location>
        <begin position="78"/>
        <end position="93"/>
    </location>
</feature>
<feature type="transmembrane region" description="Helical" evidence="1">
    <location>
        <begin position="94"/>
        <end position="114"/>
    </location>
</feature>
<feature type="topological domain" description="Periplasmic" evidence="5">
    <location>
        <begin position="115"/>
        <end position="148"/>
    </location>
</feature>
<feature type="transmembrane region" description="Helical" evidence="1">
    <location>
        <begin position="149"/>
        <end position="169"/>
    </location>
</feature>
<feature type="topological domain" description="Cytoplasmic" evidence="5">
    <location>
        <begin position="170"/>
        <end position="200"/>
    </location>
</feature>
<feature type="transmembrane region" description="Helical" evidence="1">
    <location>
        <begin position="201"/>
        <end position="221"/>
    </location>
</feature>
<feature type="topological domain" description="Periplasmic" evidence="5">
    <location>
        <begin position="222"/>
        <end position="236"/>
    </location>
</feature>
<feature type="transmembrane region" description="Helical" evidence="1">
    <location>
        <begin position="237"/>
        <end position="257"/>
    </location>
</feature>
<feature type="topological domain" description="Cytoplasmic" evidence="5">
    <location>
        <begin position="258"/>
        <end position="272"/>
    </location>
</feature>
<feature type="transmembrane region" description="Helical" evidence="1">
    <location>
        <begin position="273"/>
        <end position="293"/>
    </location>
</feature>
<feature type="topological domain" description="Periplasmic" evidence="5">
    <location>
        <begin position="294"/>
        <end position="323"/>
    </location>
</feature>
<feature type="transmembrane region" description="Helical" evidence="1">
    <location>
        <begin position="324"/>
        <end position="344"/>
    </location>
</feature>
<feature type="topological domain" description="Cytoplasmic" evidence="5">
    <location>
        <begin position="345"/>
        <end position="354"/>
    </location>
</feature>
<feature type="transmembrane region" description="Helical" evidence="1">
    <location>
        <begin position="355"/>
        <end position="375"/>
    </location>
</feature>
<feature type="topological domain" description="Periplasmic" evidence="5">
    <location>
        <begin position="376"/>
        <end position="417"/>
    </location>
</feature>
<feature type="transmembrane region" description="Helical" evidence="1">
    <location>
        <begin position="418"/>
        <end position="438"/>
    </location>
</feature>
<feature type="topological domain" description="Cytoplasmic" evidence="5">
    <location>
        <begin position="439"/>
        <end position="457"/>
    </location>
</feature>
<feature type="transmembrane region" description="Helical" evidence="1">
    <location>
        <begin position="458"/>
        <end position="478"/>
    </location>
</feature>
<feature type="topological domain" description="Periplasmic" evidence="5">
    <location>
        <begin position="479"/>
        <end position="482"/>
    </location>
</feature>
<feature type="transmembrane region" description="Helical" evidence="1">
    <location>
        <begin position="483"/>
        <end position="503"/>
    </location>
</feature>
<feature type="topological domain" description="Cytoplasmic" evidence="5">
    <location>
        <begin position="504"/>
        <end position="526"/>
    </location>
</feature>
<reference key="1">
    <citation type="journal article" date="2004" name="Nucleic Acids Res.">
        <title>Unique features revealed by the genome sequence of Acinetobacter sp. ADP1, a versatile and naturally transformation competent bacterium.</title>
        <authorList>
            <person name="Barbe V."/>
            <person name="Vallenet D."/>
            <person name="Fonknechten N."/>
            <person name="Kreimeyer A."/>
            <person name="Oztas S."/>
            <person name="Labarre L."/>
            <person name="Cruveiller S."/>
            <person name="Robert C."/>
            <person name="Duprat S."/>
            <person name="Wincker P."/>
            <person name="Ornston L.N."/>
            <person name="Weissenbach J."/>
            <person name="Marliere P."/>
            <person name="Cohen G.N."/>
            <person name="Medigue C."/>
        </authorList>
    </citation>
    <scope>NUCLEOTIDE SEQUENCE [LARGE SCALE GENOMIC DNA]</scope>
    <source>
        <strain>ATCC 33305 / BD413 / ADP1</strain>
    </source>
</reference>
<reference key="2">
    <citation type="journal article" date="2014" name="Environ. Microbiol.">
        <title>Identification of an osmo-dependent and an osmo-independent choline transporter in Acinetobacter baylyi: implications in osmostress protection and metabolic adaptation.</title>
        <authorList>
            <person name="Sand M."/>
            <person name="Stahl J."/>
            <person name="Waclawska I."/>
            <person name="Ziegler C."/>
            <person name="Averhoff B."/>
        </authorList>
    </citation>
    <scope>FUNCTION AS A TRANSPORTER</scope>
    <scope>BIOPHYSICOCHEMICAL PROPERTIES</scope>
    <scope>SUBCELLULAR LOCATION</scope>
    <scope>DISRUPTION PHENOTYPE</scope>
    <source>
        <strain>ATCC 33305 / BD413 / ADP1</strain>
    </source>
</reference>
<gene>
    <name evidence="3" type="primary">betT1</name>
    <name evidence="6" type="ordered locus">ACIAD1011</name>
</gene>
<comment type="function">
    <text evidence="2">Sodium-independent high-affinity choline uptake system. Uptake is not proton coupled. May play a role in metabolic adaptation to choline-containing environments.</text>
</comment>
<comment type="biophysicochemical properties">
    <kinetics>
        <KM evidence="2">44.26 uM for choline (in the absence of NaCl)</KM>
        <KM evidence="2">49.86 uM for choline (in the presence of 100 mM NaCl)</KM>
        <Vmax evidence="2">6.8 nmol/min/mg enzyme (in the absence of NaCl)</Vmax>
        <Vmax evidence="2">8.8 nmol/min/mg enzyme (in the presence of 100 mM NaCl)</Vmax>
    </kinetics>
</comment>
<comment type="subcellular location">
    <subcellularLocation>
        <location evidence="5">Cell inner membrane</location>
        <topology evidence="1">Multi-pass membrane protein</topology>
    </subcellularLocation>
</comment>
<comment type="disruption phenotype">
    <text evidence="2">Mutant is impaired in osmo-independent choline uptake activity. The betT1/betT2 double mutant is completely impaired in choline transport.</text>
</comment>
<comment type="similarity">
    <text evidence="4">Belongs to the BCCT transporter (TC 2.A.15) family.</text>
</comment>
<accession>Q6FDF6</accession>
<protein>
    <recommendedName>
        <fullName evidence="4">Osmo-independent choline transporter BetT1</fullName>
    </recommendedName>
</protein>
<proteinExistence type="evidence at protein level"/>
<evidence type="ECO:0000255" key="1"/>
<evidence type="ECO:0000269" key="2">
    <source>
    </source>
</evidence>
<evidence type="ECO:0000303" key="3">
    <source>
    </source>
</evidence>
<evidence type="ECO:0000305" key="4"/>
<evidence type="ECO:0000305" key="5">
    <source>
    </source>
</evidence>
<evidence type="ECO:0000312" key="6">
    <source>
        <dbReference type="EMBL" id="CAG67902.1"/>
    </source>
</evidence>
<sequence>MWSKRDEQKTYPPIRLNPFVFWSSAISISIFGMLFVLFPETSQHGLTWIQQQVNQLFGWYYMLVIILSLGFVAWLAFSQVGNIPLGKAQDKPEFGYLVWTSMLFSAGIGIALLYYGVAEPVDHFLRPPEGQGGTVEAAQNAMMYSFLHWGIHGWVLYALVGVTLGYFAFRRDLPLALRSALYPIFGERIHGLVGHMVDGFGILATIISLVTNLGIGALVMISGISYLFPDLPNTSSTLVVTVIMMMLVATLTTVIGIEKGLAWLSRINLRLLYLLLLFVFLTGPTNHLLNGLVQNTGDYLSHFVQKSFDLYLYDKNATGWLASWTIFYWAWWIAWAPFVGMFIARISKGRTIREVVLGVCLIPLGFTLAWISIFGNTAIDLILNHGQQIIGSLVIQDPALSLFKLLEYLPFHPYVAGIVVVICFVLFLTPVGSGTLMIANLSSQGGSSDSDSPIWLRVFWSIAITIVSIGLLLAGSFSAMQSAVVLCGLPFSVILLLYMFGLAKALKQETQQPVVESHTTETSGSD</sequence>
<name>BETT1_ACIAD</name>
<dbReference type="EMBL" id="CR543861">
    <property type="protein sequence ID" value="CAG67902.1"/>
    <property type="molecule type" value="Genomic_DNA"/>
</dbReference>
<dbReference type="RefSeq" id="WP_004921791.1">
    <property type="nucleotide sequence ID" value="NC_005966.1"/>
</dbReference>
<dbReference type="SMR" id="Q6FDF6"/>
<dbReference type="STRING" id="202950.GCA_001485005_01350"/>
<dbReference type="GeneID" id="45233457"/>
<dbReference type="KEGG" id="aci:ACIAD1011"/>
<dbReference type="eggNOG" id="COG1292">
    <property type="taxonomic scope" value="Bacteria"/>
</dbReference>
<dbReference type="HOGENOM" id="CLU_010118_5_2_6"/>
<dbReference type="OrthoDB" id="9775735at2"/>
<dbReference type="BioCyc" id="ASP62977:ACIAD_RS04660-MONOMER"/>
<dbReference type="SABIO-RK" id="Q6FDF6"/>
<dbReference type="Proteomes" id="UP000000430">
    <property type="component" value="Chromosome"/>
</dbReference>
<dbReference type="GO" id="GO:0005886">
    <property type="term" value="C:plasma membrane"/>
    <property type="evidence" value="ECO:0007669"/>
    <property type="project" value="UniProtKB-SubCell"/>
</dbReference>
<dbReference type="GO" id="GO:0022857">
    <property type="term" value="F:transmembrane transporter activity"/>
    <property type="evidence" value="ECO:0007669"/>
    <property type="project" value="InterPro"/>
</dbReference>
<dbReference type="InterPro" id="IPR018093">
    <property type="entry name" value="BCCT_CS"/>
</dbReference>
<dbReference type="InterPro" id="IPR000060">
    <property type="entry name" value="BCCT_transptr"/>
</dbReference>
<dbReference type="NCBIfam" id="TIGR00842">
    <property type="entry name" value="bcct"/>
    <property type="match status" value="1"/>
</dbReference>
<dbReference type="PANTHER" id="PTHR30047:SF7">
    <property type="entry name" value="HIGH-AFFINITY CHOLINE TRANSPORT PROTEIN"/>
    <property type="match status" value="1"/>
</dbReference>
<dbReference type="PANTHER" id="PTHR30047">
    <property type="entry name" value="HIGH-AFFINITY CHOLINE TRANSPORT PROTEIN-RELATED"/>
    <property type="match status" value="1"/>
</dbReference>
<dbReference type="Pfam" id="PF02028">
    <property type="entry name" value="BCCT"/>
    <property type="match status" value="1"/>
</dbReference>
<dbReference type="PROSITE" id="PS01303">
    <property type="entry name" value="BCCT"/>
    <property type="match status" value="1"/>
</dbReference>
<keyword id="KW-0997">Cell inner membrane</keyword>
<keyword id="KW-1003">Cell membrane</keyword>
<keyword id="KW-0472">Membrane</keyword>
<keyword id="KW-0812">Transmembrane</keyword>
<keyword id="KW-1133">Transmembrane helix</keyword>
<keyword id="KW-0813">Transport</keyword>